<sequence length="652" mass="74609">MPPLLTQPEVLERRLKEIPPEPGCYLMRDGEDRILYVGKSKSLRSRVRSYFRSRHDLSPRIRLMTRQVCEIEFIVTDSEAEALALESNLIKNHQPHFNVLLKDDKKYPYLCITWSEAYPRIFITRRRRFRSPLDRFYGPYVDVGLLRRTLFLVKRVFPLRQRPRPLHPDRTCLNYSIGRCPGVCQEKITSEDYHRTLRKVAMVFQGRSDELQRLLDEQMNRYAERLDFESAARVRDQLQGLDQLTADQKMSLPDSSVSRDVLALACDDRLAAVQLFQMRAGKLVGRLGYTADASALAPGLILQRVIEEHYSQVDAVEVPPELLVQHALPQQQLLEDWLTEQRERKVQIHCPKQRQKADLIELVQRNAEFELLRAKQGQEQQALATEDLAQLLEMPTPPRRIEGYDISHIQGSDAVASQVVFIDGLPAKQHYRKYKIRSSSIQSGHSDDFMAMAEIMRRRFRRWARAKADGVDVGALRHKGGSALQTDGLNDWPDVVMIDGGKGQLSAVMEALRELDLHEDLNVCSLAKQREEVFLPGESQPLESEPDQLGVALLRRLRDEAHRFAVSFHRQQRGERMKRSRLSDIPGVGPKRVKDLLAHFHSIDAIQMASVDLLSKAPGVGTALARDIHGFFHPAEEAGQDECSEEPRAHTA</sequence>
<organism>
    <name type="scientific">Parasynechococcus marenigrum (strain WH8102)</name>
    <dbReference type="NCBI Taxonomy" id="84588"/>
    <lineage>
        <taxon>Bacteria</taxon>
        <taxon>Bacillati</taxon>
        <taxon>Cyanobacteriota</taxon>
        <taxon>Cyanophyceae</taxon>
        <taxon>Synechococcales</taxon>
        <taxon>Prochlorococcaceae</taxon>
        <taxon>Parasynechococcus</taxon>
        <taxon>Parasynechococcus marenigrum</taxon>
    </lineage>
</organism>
<keyword id="KW-0963">Cytoplasm</keyword>
<keyword id="KW-0227">DNA damage</keyword>
<keyword id="KW-0228">DNA excision</keyword>
<keyword id="KW-0234">DNA repair</keyword>
<keyword id="KW-0267">Excision nuclease</keyword>
<keyword id="KW-0742">SOS response</keyword>
<name>UVRC_PARMW</name>
<accession>Q7U6U0</accession>
<proteinExistence type="inferred from homology"/>
<gene>
    <name evidence="1" type="primary">uvrC</name>
    <name type="ordered locus">SYNW1246</name>
</gene>
<protein>
    <recommendedName>
        <fullName evidence="1">UvrABC system protein C</fullName>
        <shortName evidence="1">Protein UvrC</shortName>
    </recommendedName>
    <alternativeName>
        <fullName evidence="1">Excinuclease ABC subunit C</fullName>
    </alternativeName>
</protein>
<dbReference type="EMBL" id="BX569692">
    <property type="protein sequence ID" value="CAE07761.1"/>
    <property type="molecule type" value="Genomic_DNA"/>
</dbReference>
<dbReference type="RefSeq" id="WP_011128110.1">
    <property type="nucleotide sequence ID" value="NC_005070.1"/>
</dbReference>
<dbReference type="SMR" id="Q7U6U0"/>
<dbReference type="STRING" id="84588.SYNW1246"/>
<dbReference type="KEGG" id="syw:SYNW1246"/>
<dbReference type="eggNOG" id="COG0322">
    <property type="taxonomic scope" value="Bacteria"/>
</dbReference>
<dbReference type="HOGENOM" id="CLU_014841_3_2_3"/>
<dbReference type="Proteomes" id="UP000001422">
    <property type="component" value="Chromosome"/>
</dbReference>
<dbReference type="GO" id="GO:0005737">
    <property type="term" value="C:cytoplasm"/>
    <property type="evidence" value="ECO:0007669"/>
    <property type="project" value="UniProtKB-SubCell"/>
</dbReference>
<dbReference type="GO" id="GO:0009380">
    <property type="term" value="C:excinuclease repair complex"/>
    <property type="evidence" value="ECO:0007669"/>
    <property type="project" value="InterPro"/>
</dbReference>
<dbReference type="GO" id="GO:0003677">
    <property type="term" value="F:DNA binding"/>
    <property type="evidence" value="ECO:0007669"/>
    <property type="project" value="UniProtKB-UniRule"/>
</dbReference>
<dbReference type="GO" id="GO:0009381">
    <property type="term" value="F:excinuclease ABC activity"/>
    <property type="evidence" value="ECO:0007669"/>
    <property type="project" value="UniProtKB-UniRule"/>
</dbReference>
<dbReference type="GO" id="GO:0006289">
    <property type="term" value="P:nucleotide-excision repair"/>
    <property type="evidence" value="ECO:0007669"/>
    <property type="project" value="UniProtKB-UniRule"/>
</dbReference>
<dbReference type="GO" id="GO:0009432">
    <property type="term" value="P:SOS response"/>
    <property type="evidence" value="ECO:0007669"/>
    <property type="project" value="UniProtKB-UniRule"/>
</dbReference>
<dbReference type="CDD" id="cd10434">
    <property type="entry name" value="GIY-YIG_UvrC_Cho"/>
    <property type="match status" value="1"/>
</dbReference>
<dbReference type="FunFam" id="3.40.1440.10:FF:000001">
    <property type="entry name" value="UvrABC system protein C"/>
    <property type="match status" value="1"/>
</dbReference>
<dbReference type="Gene3D" id="1.10.150.20">
    <property type="entry name" value="5' to 3' exonuclease, C-terminal subdomain"/>
    <property type="match status" value="1"/>
</dbReference>
<dbReference type="Gene3D" id="3.40.1440.10">
    <property type="entry name" value="GIY-YIG endonuclease"/>
    <property type="match status" value="1"/>
</dbReference>
<dbReference type="Gene3D" id="4.10.860.10">
    <property type="entry name" value="UVR domain"/>
    <property type="match status" value="1"/>
</dbReference>
<dbReference type="Gene3D" id="3.30.420.340">
    <property type="entry name" value="UvrC, RNAse H endonuclease domain"/>
    <property type="match status" value="1"/>
</dbReference>
<dbReference type="HAMAP" id="MF_00203">
    <property type="entry name" value="UvrC"/>
    <property type="match status" value="1"/>
</dbReference>
<dbReference type="InterPro" id="IPR000305">
    <property type="entry name" value="GIY-YIG_endonuc"/>
</dbReference>
<dbReference type="InterPro" id="IPR035901">
    <property type="entry name" value="GIY-YIG_endonuc_sf"/>
</dbReference>
<dbReference type="InterPro" id="IPR047296">
    <property type="entry name" value="GIY-YIG_UvrC_Cho"/>
</dbReference>
<dbReference type="InterPro" id="IPR003583">
    <property type="entry name" value="Hlx-hairpin-Hlx_DNA-bd_motif"/>
</dbReference>
<dbReference type="InterPro" id="IPR010994">
    <property type="entry name" value="RuvA_2-like"/>
</dbReference>
<dbReference type="InterPro" id="IPR001943">
    <property type="entry name" value="UVR_dom"/>
</dbReference>
<dbReference type="InterPro" id="IPR036876">
    <property type="entry name" value="UVR_dom_sf"/>
</dbReference>
<dbReference type="InterPro" id="IPR050066">
    <property type="entry name" value="UvrABC_protein_C"/>
</dbReference>
<dbReference type="InterPro" id="IPR004791">
    <property type="entry name" value="UvrC"/>
</dbReference>
<dbReference type="InterPro" id="IPR001162">
    <property type="entry name" value="UvrC_RNase_H_dom"/>
</dbReference>
<dbReference type="InterPro" id="IPR038476">
    <property type="entry name" value="UvrC_RNase_H_dom_sf"/>
</dbReference>
<dbReference type="NCBIfam" id="NF001824">
    <property type="entry name" value="PRK00558.1-5"/>
    <property type="match status" value="1"/>
</dbReference>
<dbReference type="NCBIfam" id="TIGR00194">
    <property type="entry name" value="uvrC"/>
    <property type="match status" value="1"/>
</dbReference>
<dbReference type="PANTHER" id="PTHR30562:SF1">
    <property type="entry name" value="UVRABC SYSTEM PROTEIN C"/>
    <property type="match status" value="1"/>
</dbReference>
<dbReference type="PANTHER" id="PTHR30562">
    <property type="entry name" value="UVRC/OXIDOREDUCTASE"/>
    <property type="match status" value="1"/>
</dbReference>
<dbReference type="Pfam" id="PF01541">
    <property type="entry name" value="GIY-YIG"/>
    <property type="match status" value="1"/>
</dbReference>
<dbReference type="Pfam" id="PF14520">
    <property type="entry name" value="HHH_5"/>
    <property type="match status" value="1"/>
</dbReference>
<dbReference type="Pfam" id="PF02151">
    <property type="entry name" value="UVR"/>
    <property type="match status" value="1"/>
</dbReference>
<dbReference type="Pfam" id="PF22920">
    <property type="entry name" value="UvrC_RNaseH"/>
    <property type="match status" value="1"/>
</dbReference>
<dbReference type="Pfam" id="PF08459">
    <property type="entry name" value="UvrC_RNaseH_dom"/>
    <property type="match status" value="1"/>
</dbReference>
<dbReference type="SMART" id="SM00465">
    <property type="entry name" value="GIYc"/>
    <property type="match status" value="1"/>
</dbReference>
<dbReference type="SMART" id="SM00278">
    <property type="entry name" value="HhH1"/>
    <property type="match status" value="2"/>
</dbReference>
<dbReference type="SUPFAM" id="SSF46600">
    <property type="entry name" value="C-terminal UvrC-binding domain of UvrB"/>
    <property type="match status" value="1"/>
</dbReference>
<dbReference type="SUPFAM" id="SSF82771">
    <property type="entry name" value="GIY-YIG endonuclease"/>
    <property type="match status" value="1"/>
</dbReference>
<dbReference type="SUPFAM" id="SSF47781">
    <property type="entry name" value="RuvA domain 2-like"/>
    <property type="match status" value="1"/>
</dbReference>
<dbReference type="PROSITE" id="PS50164">
    <property type="entry name" value="GIY_YIG"/>
    <property type="match status" value="1"/>
</dbReference>
<dbReference type="PROSITE" id="PS50151">
    <property type="entry name" value="UVR"/>
    <property type="match status" value="1"/>
</dbReference>
<dbReference type="PROSITE" id="PS50165">
    <property type="entry name" value="UVRC"/>
    <property type="match status" value="1"/>
</dbReference>
<reference key="1">
    <citation type="journal article" date="2003" name="Nature">
        <title>The genome of a motile marine Synechococcus.</title>
        <authorList>
            <person name="Palenik B."/>
            <person name="Brahamsha B."/>
            <person name="Larimer F.W."/>
            <person name="Land M.L."/>
            <person name="Hauser L."/>
            <person name="Chain P."/>
            <person name="Lamerdin J.E."/>
            <person name="Regala W."/>
            <person name="Allen E.E."/>
            <person name="McCarren J."/>
            <person name="Paulsen I.T."/>
            <person name="Dufresne A."/>
            <person name="Partensky F."/>
            <person name="Webb E.A."/>
            <person name="Waterbury J."/>
        </authorList>
    </citation>
    <scope>NUCLEOTIDE SEQUENCE [LARGE SCALE GENOMIC DNA]</scope>
    <source>
        <strain>WH8102</strain>
    </source>
</reference>
<evidence type="ECO:0000255" key="1">
    <source>
        <dbReference type="HAMAP-Rule" id="MF_00203"/>
    </source>
</evidence>
<comment type="function">
    <text evidence="1">The UvrABC repair system catalyzes the recognition and processing of DNA lesions. UvrC both incises the 5' and 3' sides of the lesion. The N-terminal half is responsible for the 3' incision and the C-terminal half is responsible for the 5' incision.</text>
</comment>
<comment type="subunit">
    <text evidence="1">Interacts with UvrB in an incision complex.</text>
</comment>
<comment type="subcellular location">
    <subcellularLocation>
        <location evidence="1">Cytoplasm</location>
    </subcellularLocation>
</comment>
<comment type="similarity">
    <text evidence="1">Belongs to the UvrC family.</text>
</comment>
<feature type="chain" id="PRO_0000227485" description="UvrABC system protein C">
    <location>
        <begin position="1"/>
        <end position="652"/>
    </location>
</feature>
<feature type="domain" description="GIY-YIG" evidence="1">
    <location>
        <begin position="20"/>
        <end position="99"/>
    </location>
</feature>
<feature type="domain" description="UVR" evidence="1">
    <location>
        <begin position="209"/>
        <end position="244"/>
    </location>
</feature>